<protein>
    <recommendedName>
        <fullName evidence="1">Photosystem I reaction center subunit XI</fullName>
    </recommendedName>
    <alternativeName>
        <fullName evidence="1">PSI subunit V</fullName>
    </alternativeName>
    <alternativeName>
        <fullName evidence="1">PSI-L</fullName>
    </alternativeName>
</protein>
<comment type="subcellular location">
    <subcellularLocation>
        <location evidence="1">Cellular thylakoid membrane</location>
        <topology evidence="1">Multi-pass membrane protein</topology>
    </subcellularLocation>
</comment>
<comment type="similarity">
    <text evidence="1">Belongs to the PsaL family.</text>
</comment>
<accession>Q116L4</accession>
<dbReference type="EMBL" id="CP000393">
    <property type="protein sequence ID" value="ABG50560.1"/>
    <property type="molecule type" value="Genomic_DNA"/>
</dbReference>
<dbReference type="RefSeq" id="WP_011610943.1">
    <property type="nucleotide sequence ID" value="NC_008312.1"/>
</dbReference>
<dbReference type="SMR" id="Q116L4"/>
<dbReference type="STRING" id="203124.Tery_1204"/>
<dbReference type="KEGG" id="ter:Tery_1204"/>
<dbReference type="eggNOG" id="ENOG502ZMJ2">
    <property type="taxonomic scope" value="Bacteria"/>
</dbReference>
<dbReference type="HOGENOM" id="CLU_092204_1_0_3"/>
<dbReference type="OrthoDB" id="464381at2"/>
<dbReference type="GO" id="GO:0009538">
    <property type="term" value="C:photosystem I reaction center"/>
    <property type="evidence" value="ECO:0007669"/>
    <property type="project" value="InterPro"/>
</dbReference>
<dbReference type="GO" id="GO:0031676">
    <property type="term" value="C:plasma membrane-derived thylakoid membrane"/>
    <property type="evidence" value="ECO:0007669"/>
    <property type="project" value="UniProtKB-SubCell"/>
</dbReference>
<dbReference type="GO" id="GO:0015979">
    <property type="term" value="P:photosynthesis"/>
    <property type="evidence" value="ECO:0007669"/>
    <property type="project" value="UniProtKB-UniRule"/>
</dbReference>
<dbReference type="Gene3D" id="1.20.1240.10">
    <property type="entry name" value="Photosystem I PsaL, reaction centre subunit XI"/>
    <property type="match status" value="1"/>
</dbReference>
<dbReference type="HAMAP" id="MF_00447">
    <property type="entry name" value="PSI_PsaL"/>
    <property type="match status" value="1"/>
</dbReference>
<dbReference type="InterPro" id="IPR003757">
    <property type="entry name" value="PSI_PsaL"/>
</dbReference>
<dbReference type="InterPro" id="IPR036592">
    <property type="entry name" value="PSI_PsaL_sf"/>
</dbReference>
<dbReference type="InterPro" id="IPR022980">
    <property type="entry name" value="PSI_suXI"/>
</dbReference>
<dbReference type="NCBIfam" id="NF001926">
    <property type="entry name" value="PRK00704.1-3"/>
    <property type="match status" value="1"/>
</dbReference>
<dbReference type="PANTHER" id="PTHR34803">
    <property type="entry name" value="PHOTOSYSTEM I REACTION CENTER SUBUNIT XI, CHLOROPLASTIC"/>
    <property type="match status" value="1"/>
</dbReference>
<dbReference type="PANTHER" id="PTHR34803:SF2">
    <property type="entry name" value="PHOTOSYSTEM I REACTION CENTER SUBUNIT XI, CHLOROPLASTIC"/>
    <property type="match status" value="1"/>
</dbReference>
<dbReference type="Pfam" id="PF02605">
    <property type="entry name" value="PsaL"/>
    <property type="match status" value="1"/>
</dbReference>
<dbReference type="SUPFAM" id="SSF81568">
    <property type="entry name" value="Photosystem I reaction center subunit XI, PsaL"/>
    <property type="match status" value="1"/>
</dbReference>
<evidence type="ECO:0000255" key="1">
    <source>
        <dbReference type="HAMAP-Rule" id="MF_00447"/>
    </source>
</evidence>
<sequence>MTQATDSGFVQPYKGDPFVGHLSTPISDSDFTRAFIGNLPIYRPGLSPILRGLEVGMAHGYFIVGPWTKLGPLRDSAVANLGGLISTIALVLIATICLSAYGLVSFQGKSPEGADPLKTSEGWSQFTGGFFIGAMGGAVVAFFLLENFELVDSIFRGLFNS</sequence>
<gene>
    <name evidence="1" type="primary">psaL</name>
    <name type="ordered locus">Tery_1204</name>
</gene>
<proteinExistence type="inferred from homology"/>
<feature type="chain" id="PRO_1000192869" description="Photosystem I reaction center subunit XI">
    <location>
        <begin position="1"/>
        <end position="161"/>
    </location>
</feature>
<feature type="transmembrane region" description="Helical" evidence="1">
    <location>
        <begin position="84"/>
        <end position="104"/>
    </location>
</feature>
<feature type="transmembrane region" description="Helical" evidence="1">
    <location>
        <begin position="126"/>
        <end position="146"/>
    </location>
</feature>
<name>PSAL_TRIEI</name>
<keyword id="KW-0472">Membrane</keyword>
<keyword id="KW-0602">Photosynthesis</keyword>
<keyword id="KW-0603">Photosystem I</keyword>
<keyword id="KW-0793">Thylakoid</keyword>
<keyword id="KW-0812">Transmembrane</keyword>
<keyword id="KW-1133">Transmembrane helix</keyword>
<reference key="1">
    <citation type="journal article" date="2015" name="Proc. Natl. Acad. Sci. U.S.A.">
        <title>Trichodesmium genome maintains abundant, widespread noncoding DNA in situ, despite oligotrophic lifestyle.</title>
        <authorList>
            <person name="Walworth N."/>
            <person name="Pfreundt U."/>
            <person name="Nelson W.C."/>
            <person name="Mincer T."/>
            <person name="Heidelberg J.F."/>
            <person name="Fu F."/>
            <person name="Waterbury J.B."/>
            <person name="Glavina del Rio T."/>
            <person name="Goodwin L."/>
            <person name="Kyrpides N.C."/>
            <person name="Land M.L."/>
            <person name="Woyke T."/>
            <person name="Hutchins D.A."/>
            <person name="Hess W.R."/>
            <person name="Webb E.A."/>
        </authorList>
    </citation>
    <scope>NUCLEOTIDE SEQUENCE [LARGE SCALE GENOMIC DNA]</scope>
    <source>
        <strain>IMS101</strain>
    </source>
</reference>
<organism>
    <name type="scientific">Trichodesmium erythraeum (strain IMS101)</name>
    <dbReference type="NCBI Taxonomy" id="203124"/>
    <lineage>
        <taxon>Bacteria</taxon>
        <taxon>Bacillati</taxon>
        <taxon>Cyanobacteriota</taxon>
        <taxon>Cyanophyceae</taxon>
        <taxon>Oscillatoriophycideae</taxon>
        <taxon>Oscillatoriales</taxon>
        <taxon>Microcoleaceae</taxon>
        <taxon>Trichodesmium</taxon>
    </lineage>
</organism>